<evidence type="ECO:0000250" key="1">
    <source>
        <dbReference type="UniProtKB" id="P07649"/>
    </source>
</evidence>
<evidence type="ECO:0000250" key="2">
    <source>
        <dbReference type="UniProtKB" id="Q12211"/>
    </source>
</evidence>
<evidence type="ECO:0000256" key="3">
    <source>
        <dbReference type="SAM" id="MobiDB-lite"/>
    </source>
</evidence>
<evidence type="ECO:0000305" key="4"/>
<sequence length="528" mass="60051">MSEPTTTPVVGNSASGDSAEQHDLGQKRGKGGNWNRPRGDHQAKKQKMDRRGDRQREQEKQGEGRDTRRKTDGPLVADEVRQPKRKVACMIGYCGTGYHGMQLNPPQKTIEGDIFQAFVKAGAISQNNADDPKKSAFMRAARTDKGVHAAGNVISLKMIIEDENIVEKINSHLPEQLRVWGVSRTNKAFECRKLCSSRVYEYLMPTYSFLNPRPGTVMSEKLLKDGTSPDEEGKKYWESVAADLESQGVSYDEWMKRACIDEIKGEETKEVAESEVKTDSKTDAATLEKIKAVERRHREEFRISGERLAKIREILKIYEGTHNFHNFTLGKAFKDPSAMRTMKSLTCSDPFLIDGTEWVSIKIHGQSFMLHQIRKMISMVALSVRCNADPQKLIPQTFEKARINIPKAPALGLLLERPVYDSYNKKLQGEFGREGVHFDNWNDQIEAFKHKFIYDKIYAEEKGQHVFHAFFSFVDVFTGDASFDFLLKQGITKECTTDYMNKKAKEEGKEIKKLEEDDDEVANEQNEG</sequence>
<dbReference type="EC" id="5.4.99.-" evidence="2"/>
<dbReference type="EMBL" id="CR382129">
    <property type="protein sequence ID" value="CAG82083.1"/>
    <property type="molecule type" value="Genomic_DNA"/>
</dbReference>
<dbReference type="RefSeq" id="XP_501773.1">
    <property type="nucleotide sequence ID" value="XM_501773.1"/>
</dbReference>
<dbReference type="SMR" id="Q6CC39"/>
<dbReference type="FunCoup" id="Q6CC39">
    <property type="interactions" value="1045"/>
</dbReference>
<dbReference type="STRING" id="284591.Q6CC39"/>
<dbReference type="EnsemblFungi" id="CAG82083">
    <property type="protein sequence ID" value="CAG82083"/>
    <property type="gene ID" value="YALI0_C12749g"/>
</dbReference>
<dbReference type="KEGG" id="yli:2909512"/>
<dbReference type="VEuPathDB" id="FungiDB:YALI0_C12749g"/>
<dbReference type="HOGENOM" id="CLU_021971_1_0_1"/>
<dbReference type="InParanoid" id="Q6CC39"/>
<dbReference type="OMA" id="NKAFDCR"/>
<dbReference type="OrthoDB" id="1827at4891"/>
<dbReference type="Proteomes" id="UP000001300">
    <property type="component" value="Chromosome C"/>
</dbReference>
<dbReference type="GO" id="GO:0005634">
    <property type="term" value="C:nucleus"/>
    <property type="evidence" value="ECO:0000318"/>
    <property type="project" value="GO_Central"/>
</dbReference>
<dbReference type="GO" id="GO:0046872">
    <property type="term" value="F:metal ion binding"/>
    <property type="evidence" value="ECO:0007669"/>
    <property type="project" value="UniProtKB-KW"/>
</dbReference>
<dbReference type="GO" id="GO:0009982">
    <property type="term" value="F:pseudouridine synthase activity"/>
    <property type="evidence" value="ECO:0000318"/>
    <property type="project" value="GO_Central"/>
</dbReference>
<dbReference type="GO" id="GO:0003723">
    <property type="term" value="F:RNA binding"/>
    <property type="evidence" value="ECO:0007669"/>
    <property type="project" value="InterPro"/>
</dbReference>
<dbReference type="GO" id="GO:0106032">
    <property type="term" value="F:snRNA pseudouridine synthase activity"/>
    <property type="evidence" value="ECO:0007669"/>
    <property type="project" value="RHEA"/>
</dbReference>
<dbReference type="GO" id="GO:0106029">
    <property type="term" value="F:tRNA pseudouridine synthase activity"/>
    <property type="evidence" value="ECO:0007669"/>
    <property type="project" value="RHEA"/>
</dbReference>
<dbReference type="GO" id="GO:0006397">
    <property type="term" value="P:mRNA processing"/>
    <property type="evidence" value="ECO:0007669"/>
    <property type="project" value="UniProtKB-KW"/>
</dbReference>
<dbReference type="GO" id="GO:1990481">
    <property type="term" value="P:mRNA pseudouridine synthesis"/>
    <property type="evidence" value="ECO:0000318"/>
    <property type="project" value="GO_Central"/>
</dbReference>
<dbReference type="GO" id="GO:0031120">
    <property type="term" value="P:snRNA pseudouridine synthesis"/>
    <property type="evidence" value="ECO:0007669"/>
    <property type="project" value="EnsemblFungi"/>
</dbReference>
<dbReference type="GO" id="GO:0031119">
    <property type="term" value="P:tRNA pseudouridine synthesis"/>
    <property type="evidence" value="ECO:0000318"/>
    <property type="project" value="GO_Central"/>
</dbReference>
<dbReference type="CDD" id="cd02568">
    <property type="entry name" value="PseudoU_synth_PUS1_PUS2"/>
    <property type="match status" value="1"/>
</dbReference>
<dbReference type="FunFam" id="3.30.70.580:FF:000002">
    <property type="entry name" value="tRNA pseudouridine synthase"/>
    <property type="match status" value="1"/>
</dbReference>
<dbReference type="FunFam" id="3.30.70.660:FF:000002">
    <property type="entry name" value="tRNA pseudouridine synthase"/>
    <property type="match status" value="1"/>
</dbReference>
<dbReference type="Gene3D" id="3.30.70.660">
    <property type="entry name" value="Pseudouridine synthase I, catalytic domain, C-terminal subdomain"/>
    <property type="match status" value="1"/>
</dbReference>
<dbReference type="Gene3D" id="3.30.70.580">
    <property type="entry name" value="Pseudouridine synthase I, catalytic domain, N-terminal subdomain"/>
    <property type="match status" value="1"/>
</dbReference>
<dbReference type="InterPro" id="IPR020103">
    <property type="entry name" value="PsdUridine_synth_cat_dom_sf"/>
</dbReference>
<dbReference type="InterPro" id="IPR001406">
    <property type="entry name" value="PsdUridine_synth_TruA"/>
</dbReference>
<dbReference type="InterPro" id="IPR020097">
    <property type="entry name" value="PsdUridine_synth_TruA_a/b_dom"/>
</dbReference>
<dbReference type="InterPro" id="IPR020095">
    <property type="entry name" value="PsdUridine_synth_TruA_C"/>
</dbReference>
<dbReference type="InterPro" id="IPR041708">
    <property type="entry name" value="PUS1/PUS2-like"/>
</dbReference>
<dbReference type="InterPro" id="IPR020094">
    <property type="entry name" value="TruA/RsuA/RluB/E/F_N"/>
</dbReference>
<dbReference type="NCBIfam" id="TIGR00071">
    <property type="entry name" value="hisT_truA"/>
    <property type="match status" value="1"/>
</dbReference>
<dbReference type="PANTHER" id="PTHR11142">
    <property type="entry name" value="PSEUDOURIDYLATE SYNTHASE"/>
    <property type="match status" value="1"/>
</dbReference>
<dbReference type="PANTHER" id="PTHR11142:SF4">
    <property type="entry name" value="PSEUDOURIDYLATE SYNTHASE 1 HOMOLOG"/>
    <property type="match status" value="1"/>
</dbReference>
<dbReference type="Pfam" id="PF01416">
    <property type="entry name" value="PseudoU_synth_1"/>
    <property type="match status" value="1"/>
</dbReference>
<dbReference type="SUPFAM" id="SSF55120">
    <property type="entry name" value="Pseudouridine synthase"/>
    <property type="match status" value="1"/>
</dbReference>
<organism>
    <name type="scientific">Yarrowia lipolytica (strain CLIB 122 / E 150)</name>
    <name type="common">Yeast</name>
    <name type="synonym">Candida lipolytica</name>
    <dbReference type="NCBI Taxonomy" id="284591"/>
    <lineage>
        <taxon>Eukaryota</taxon>
        <taxon>Fungi</taxon>
        <taxon>Dikarya</taxon>
        <taxon>Ascomycota</taxon>
        <taxon>Saccharomycotina</taxon>
        <taxon>Dipodascomycetes</taxon>
        <taxon>Dipodascales</taxon>
        <taxon>Dipodascales incertae sedis</taxon>
        <taxon>Yarrowia</taxon>
    </lineage>
</organism>
<accession>Q6CC39</accession>
<feature type="chain" id="PRO_0000057529" description="tRNA pseudouridine synthase 1">
    <location>
        <begin position="1"/>
        <end position="528"/>
    </location>
</feature>
<feature type="region of interest" description="Disordered" evidence="3">
    <location>
        <begin position="1"/>
        <end position="80"/>
    </location>
</feature>
<feature type="region of interest" description="Disordered" evidence="3">
    <location>
        <begin position="505"/>
        <end position="528"/>
    </location>
</feature>
<feature type="compositionally biased region" description="Polar residues" evidence="3">
    <location>
        <begin position="1"/>
        <end position="18"/>
    </location>
</feature>
<feature type="compositionally biased region" description="Basic and acidic residues" evidence="3">
    <location>
        <begin position="49"/>
        <end position="80"/>
    </location>
</feature>
<feature type="compositionally biased region" description="Basic and acidic residues" evidence="3">
    <location>
        <begin position="505"/>
        <end position="515"/>
    </location>
</feature>
<feature type="compositionally biased region" description="Acidic residues" evidence="3">
    <location>
        <begin position="516"/>
        <end position="528"/>
    </location>
</feature>
<feature type="active site" description="Nucleophile" evidence="1">
    <location>
        <position position="144"/>
    </location>
</feature>
<keyword id="KW-0413">Isomerase</keyword>
<keyword id="KW-0479">Metal-binding</keyword>
<keyword id="KW-0507">mRNA processing</keyword>
<keyword id="KW-0539">Nucleus</keyword>
<keyword id="KW-1185">Reference proteome</keyword>
<keyword id="KW-0819">tRNA processing</keyword>
<keyword id="KW-0862">Zinc</keyword>
<proteinExistence type="inferred from homology"/>
<name>PUS1_YARLI</name>
<protein>
    <recommendedName>
        <fullName>tRNA pseudouridine synthase 1</fullName>
        <ecNumber evidence="2">5.4.99.-</ecNumber>
    </recommendedName>
    <alternativeName>
        <fullName>tRNA pseudouridylate synthase 1</fullName>
    </alternativeName>
    <alternativeName>
        <fullName>tRNA-uridine isomerase 1</fullName>
    </alternativeName>
</protein>
<reference key="1">
    <citation type="journal article" date="2004" name="Nature">
        <title>Genome evolution in yeasts.</title>
        <authorList>
            <person name="Dujon B."/>
            <person name="Sherman D."/>
            <person name="Fischer G."/>
            <person name="Durrens P."/>
            <person name="Casaregola S."/>
            <person name="Lafontaine I."/>
            <person name="de Montigny J."/>
            <person name="Marck C."/>
            <person name="Neuveglise C."/>
            <person name="Talla E."/>
            <person name="Goffard N."/>
            <person name="Frangeul L."/>
            <person name="Aigle M."/>
            <person name="Anthouard V."/>
            <person name="Babour A."/>
            <person name="Barbe V."/>
            <person name="Barnay S."/>
            <person name="Blanchin S."/>
            <person name="Beckerich J.-M."/>
            <person name="Beyne E."/>
            <person name="Bleykasten C."/>
            <person name="Boisrame A."/>
            <person name="Boyer J."/>
            <person name="Cattolico L."/>
            <person name="Confanioleri F."/>
            <person name="de Daruvar A."/>
            <person name="Despons L."/>
            <person name="Fabre E."/>
            <person name="Fairhead C."/>
            <person name="Ferry-Dumazet H."/>
            <person name="Groppi A."/>
            <person name="Hantraye F."/>
            <person name="Hennequin C."/>
            <person name="Jauniaux N."/>
            <person name="Joyet P."/>
            <person name="Kachouri R."/>
            <person name="Kerrest A."/>
            <person name="Koszul R."/>
            <person name="Lemaire M."/>
            <person name="Lesur I."/>
            <person name="Ma L."/>
            <person name="Muller H."/>
            <person name="Nicaud J.-M."/>
            <person name="Nikolski M."/>
            <person name="Oztas S."/>
            <person name="Ozier-Kalogeropoulos O."/>
            <person name="Pellenz S."/>
            <person name="Potier S."/>
            <person name="Richard G.-F."/>
            <person name="Straub M.-L."/>
            <person name="Suleau A."/>
            <person name="Swennen D."/>
            <person name="Tekaia F."/>
            <person name="Wesolowski-Louvel M."/>
            <person name="Westhof E."/>
            <person name="Wirth B."/>
            <person name="Zeniou-Meyer M."/>
            <person name="Zivanovic Y."/>
            <person name="Bolotin-Fukuhara M."/>
            <person name="Thierry A."/>
            <person name="Bouchier C."/>
            <person name="Caudron B."/>
            <person name="Scarpelli C."/>
            <person name="Gaillardin C."/>
            <person name="Weissenbach J."/>
            <person name="Wincker P."/>
            <person name="Souciet J.-L."/>
        </authorList>
    </citation>
    <scope>NUCLEOTIDE SEQUENCE [LARGE SCALE GENOMIC DNA]</scope>
    <source>
        <strain>CLIB 122 / E 150</strain>
    </source>
</reference>
<comment type="function">
    <text evidence="2">Formation of pseudouridine at positions 27 and 28 in the anticodon stem and loop of transfer RNAs; at positions 34 and 36 of intron-containing precursor tRNA(Ile) and at position 35 in the intron-containing tRNA(Tyr). Catalyzes pseudouridylation at position 44 in U2 snRNA. Also catalyzes pseudouridylation of mRNAs.</text>
</comment>
<comment type="catalytic activity">
    <reaction evidence="2">
        <text>a uridine in tRNA = a pseudouridine in tRNA</text>
        <dbReference type="Rhea" id="RHEA:54572"/>
        <dbReference type="Rhea" id="RHEA-COMP:13339"/>
        <dbReference type="Rhea" id="RHEA-COMP:13934"/>
        <dbReference type="ChEBI" id="CHEBI:65314"/>
        <dbReference type="ChEBI" id="CHEBI:65315"/>
    </reaction>
</comment>
<comment type="catalytic activity">
    <reaction evidence="2">
        <text>uridine in snRNA = pseudouridine in snRNA</text>
        <dbReference type="Rhea" id="RHEA:51124"/>
        <dbReference type="Rhea" id="RHEA-COMP:12891"/>
        <dbReference type="Rhea" id="RHEA-COMP:12892"/>
        <dbReference type="ChEBI" id="CHEBI:65314"/>
        <dbReference type="ChEBI" id="CHEBI:65315"/>
    </reaction>
</comment>
<comment type="catalytic activity">
    <reaction evidence="2">
        <text>a uridine in mRNA = a pseudouridine in mRNA</text>
        <dbReference type="Rhea" id="RHEA:56644"/>
        <dbReference type="Rhea" id="RHEA-COMP:14658"/>
        <dbReference type="Rhea" id="RHEA-COMP:14659"/>
        <dbReference type="ChEBI" id="CHEBI:65314"/>
        <dbReference type="ChEBI" id="CHEBI:65315"/>
    </reaction>
</comment>
<comment type="cofactor">
    <cofactor evidence="2">
        <name>Zn(2+)</name>
        <dbReference type="ChEBI" id="CHEBI:29105"/>
    </cofactor>
    <text evidence="2">Binds 1 zinc ion per subunit.</text>
</comment>
<comment type="subcellular location">
    <subcellularLocation>
        <location evidence="2">Nucleus</location>
    </subcellularLocation>
</comment>
<comment type="similarity">
    <text evidence="4">Belongs to the tRNA pseudouridine synthase TruA family.</text>
</comment>
<gene>
    <name type="primary">PUS1</name>
    <name type="ordered locus">YALI0C12749g</name>
</gene>